<sequence>MRPADRAAQQVRPLTLTRNYTKHAEGSVLVEFGDTKVLCTATVEEGVPRFLKGQGQGWITAEYGMLPRSTHSRNAREAAKGKQGGRTLEIQRLIARSLRAAVDLKKLGEFTITLDCDVLQADGGTRTASISGACVALADALNKLVASGKLKANPMKGLVAAVSVGIVKGEALCDLEYVEDSAAETDMNVVMMEDGRMIEVQGTAEGEPFSHEELLALLDLARGGIETIFQAQKAALES</sequence>
<organism>
    <name type="scientific">Yersinia pestis bv. Antiqua (strain Nepal516)</name>
    <dbReference type="NCBI Taxonomy" id="377628"/>
    <lineage>
        <taxon>Bacteria</taxon>
        <taxon>Pseudomonadati</taxon>
        <taxon>Pseudomonadota</taxon>
        <taxon>Gammaproteobacteria</taxon>
        <taxon>Enterobacterales</taxon>
        <taxon>Yersiniaceae</taxon>
        <taxon>Yersinia</taxon>
    </lineage>
</organism>
<comment type="function">
    <text evidence="1">Phosphorolytic 3'-5' exoribonuclease that plays an important role in tRNA 3'-end maturation. Removes nucleotide residues following the 3'-CCA terminus of tRNAs; can also add nucleotides to the ends of RNA molecules by using nucleoside diphosphates as substrates, but this may not be physiologically important. Probably plays a role in initiation of 16S rRNA degradation (leading to ribosome degradation) during starvation.</text>
</comment>
<comment type="catalytic activity">
    <reaction evidence="1">
        <text>tRNA(n+1) + phosphate = tRNA(n) + a ribonucleoside 5'-diphosphate</text>
        <dbReference type="Rhea" id="RHEA:10628"/>
        <dbReference type="Rhea" id="RHEA-COMP:17343"/>
        <dbReference type="Rhea" id="RHEA-COMP:17344"/>
        <dbReference type="ChEBI" id="CHEBI:43474"/>
        <dbReference type="ChEBI" id="CHEBI:57930"/>
        <dbReference type="ChEBI" id="CHEBI:173114"/>
        <dbReference type="EC" id="2.7.7.56"/>
    </reaction>
</comment>
<comment type="subunit">
    <text evidence="1">Homohexameric ring arranged as a trimer of dimers.</text>
</comment>
<comment type="similarity">
    <text evidence="1">Belongs to the RNase PH family.</text>
</comment>
<accession>Q1CCZ7</accession>
<accession>D1Q2G6</accession>
<evidence type="ECO:0000255" key="1">
    <source>
        <dbReference type="HAMAP-Rule" id="MF_00564"/>
    </source>
</evidence>
<protein>
    <recommendedName>
        <fullName evidence="1">Ribonuclease PH</fullName>
        <shortName evidence="1">RNase PH</shortName>
        <ecNumber evidence="1">2.7.7.56</ecNumber>
    </recommendedName>
    <alternativeName>
        <fullName evidence="1">tRNA nucleotidyltransferase</fullName>
    </alternativeName>
</protein>
<feature type="chain" id="PRO_1000024909" description="Ribonuclease PH">
    <location>
        <begin position="1"/>
        <end position="238"/>
    </location>
</feature>
<feature type="binding site" evidence="1">
    <location>
        <position position="86"/>
    </location>
    <ligand>
        <name>phosphate</name>
        <dbReference type="ChEBI" id="CHEBI:43474"/>
        <note>substrate</note>
    </ligand>
</feature>
<feature type="binding site" evidence="1">
    <location>
        <begin position="124"/>
        <end position="126"/>
    </location>
    <ligand>
        <name>phosphate</name>
        <dbReference type="ChEBI" id="CHEBI:43474"/>
        <note>substrate</note>
    </ligand>
</feature>
<gene>
    <name evidence="1" type="primary">rph</name>
    <name type="ordered locus">YPN_3806</name>
    <name type="ORF">YP516_4326</name>
</gene>
<reference key="1">
    <citation type="journal article" date="2006" name="J. Bacteriol.">
        <title>Complete genome sequence of Yersinia pestis strains Antiqua and Nepal516: evidence of gene reduction in an emerging pathogen.</title>
        <authorList>
            <person name="Chain P.S.G."/>
            <person name="Hu P."/>
            <person name="Malfatti S.A."/>
            <person name="Radnedge L."/>
            <person name="Larimer F."/>
            <person name="Vergez L.M."/>
            <person name="Worsham P."/>
            <person name="Chu M.C."/>
            <person name="Andersen G.L."/>
        </authorList>
    </citation>
    <scope>NUCLEOTIDE SEQUENCE [LARGE SCALE GENOMIC DNA]</scope>
    <source>
        <strain>Nepal516</strain>
    </source>
</reference>
<reference key="2">
    <citation type="submission" date="2009-04" db="EMBL/GenBank/DDBJ databases">
        <title>Yersinia pestis Nepal516A whole genome shotgun sequencing project.</title>
        <authorList>
            <person name="Plunkett G. III"/>
            <person name="Anderson B.D."/>
            <person name="Baumler D.J."/>
            <person name="Burland V."/>
            <person name="Cabot E.L."/>
            <person name="Glasner J.D."/>
            <person name="Mau B."/>
            <person name="Neeno-Eckwall E."/>
            <person name="Perna N.T."/>
            <person name="Munk A.C."/>
            <person name="Tapia R."/>
            <person name="Green L.D."/>
            <person name="Rogers Y.C."/>
            <person name="Detter J.C."/>
            <person name="Bruce D.C."/>
            <person name="Brettin T.S."/>
        </authorList>
    </citation>
    <scope>NUCLEOTIDE SEQUENCE [LARGE SCALE GENOMIC DNA]</scope>
    <source>
        <strain>Nepal516</strain>
    </source>
</reference>
<proteinExistence type="inferred from homology"/>
<dbReference type="EC" id="2.7.7.56" evidence="1"/>
<dbReference type="EMBL" id="CP000305">
    <property type="protein sequence ID" value="ABG20133.1"/>
    <property type="molecule type" value="Genomic_DNA"/>
</dbReference>
<dbReference type="EMBL" id="ACNQ01000019">
    <property type="protein sequence ID" value="EEO74719.1"/>
    <property type="molecule type" value="Genomic_DNA"/>
</dbReference>
<dbReference type="RefSeq" id="WP_002208997.1">
    <property type="nucleotide sequence ID" value="NZ_ACNQ01000019.1"/>
</dbReference>
<dbReference type="SMR" id="Q1CCZ7"/>
<dbReference type="GeneID" id="57974546"/>
<dbReference type="KEGG" id="ypn:YPN_3806"/>
<dbReference type="HOGENOM" id="CLU_050858_0_0_6"/>
<dbReference type="Proteomes" id="UP000008936">
    <property type="component" value="Chromosome"/>
</dbReference>
<dbReference type="GO" id="GO:0000175">
    <property type="term" value="F:3'-5'-RNA exonuclease activity"/>
    <property type="evidence" value="ECO:0007669"/>
    <property type="project" value="UniProtKB-UniRule"/>
</dbReference>
<dbReference type="GO" id="GO:0000049">
    <property type="term" value="F:tRNA binding"/>
    <property type="evidence" value="ECO:0007669"/>
    <property type="project" value="UniProtKB-UniRule"/>
</dbReference>
<dbReference type="GO" id="GO:0009022">
    <property type="term" value="F:tRNA nucleotidyltransferase activity"/>
    <property type="evidence" value="ECO:0007669"/>
    <property type="project" value="UniProtKB-UniRule"/>
</dbReference>
<dbReference type="GO" id="GO:0016075">
    <property type="term" value="P:rRNA catabolic process"/>
    <property type="evidence" value="ECO:0007669"/>
    <property type="project" value="UniProtKB-UniRule"/>
</dbReference>
<dbReference type="GO" id="GO:0006364">
    <property type="term" value="P:rRNA processing"/>
    <property type="evidence" value="ECO:0007669"/>
    <property type="project" value="UniProtKB-KW"/>
</dbReference>
<dbReference type="GO" id="GO:0008033">
    <property type="term" value="P:tRNA processing"/>
    <property type="evidence" value="ECO:0007669"/>
    <property type="project" value="UniProtKB-UniRule"/>
</dbReference>
<dbReference type="CDD" id="cd11362">
    <property type="entry name" value="RNase_PH_bact"/>
    <property type="match status" value="1"/>
</dbReference>
<dbReference type="FunFam" id="3.30.230.70:FF:000003">
    <property type="entry name" value="Ribonuclease PH"/>
    <property type="match status" value="1"/>
</dbReference>
<dbReference type="Gene3D" id="3.30.230.70">
    <property type="entry name" value="GHMP Kinase, N-terminal domain"/>
    <property type="match status" value="1"/>
</dbReference>
<dbReference type="HAMAP" id="MF_00564">
    <property type="entry name" value="RNase_PH"/>
    <property type="match status" value="1"/>
</dbReference>
<dbReference type="InterPro" id="IPR001247">
    <property type="entry name" value="ExoRNase_PH_dom1"/>
</dbReference>
<dbReference type="InterPro" id="IPR015847">
    <property type="entry name" value="ExoRNase_PH_dom2"/>
</dbReference>
<dbReference type="InterPro" id="IPR036345">
    <property type="entry name" value="ExoRNase_PH_dom2_sf"/>
</dbReference>
<dbReference type="InterPro" id="IPR027408">
    <property type="entry name" value="PNPase/RNase_PH_dom_sf"/>
</dbReference>
<dbReference type="InterPro" id="IPR020568">
    <property type="entry name" value="Ribosomal_Su5_D2-typ_SF"/>
</dbReference>
<dbReference type="InterPro" id="IPR050080">
    <property type="entry name" value="RNase_PH"/>
</dbReference>
<dbReference type="InterPro" id="IPR002381">
    <property type="entry name" value="RNase_PH_bac-type"/>
</dbReference>
<dbReference type="InterPro" id="IPR018336">
    <property type="entry name" value="RNase_PH_CS"/>
</dbReference>
<dbReference type="NCBIfam" id="TIGR01966">
    <property type="entry name" value="RNasePH"/>
    <property type="match status" value="1"/>
</dbReference>
<dbReference type="PANTHER" id="PTHR11953">
    <property type="entry name" value="EXOSOME COMPLEX COMPONENT"/>
    <property type="match status" value="1"/>
</dbReference>
<dbReference type="PANTHER" id="PTHR11953:SF0">
    <property type="entry name" value="EXOSOME COMPLEX COMPONENT RRP41"/>
    <property type="match status" value="1"/>
</dbReference>
<dbReference type="Pfam" id="PF01138">
    <property type="entry name" value="RNase_PH"/>
    <property type="match status" value="1"/>
</dbReference>
<dbReference type="Pfam" id="PF03725">
    <property type="entry name" value="RNase_PH_C"/>
    <property type="match status" value="1"/>
</dbReference>
<dbReference type="SUPFAM" id="SSF55666">
    <property type="entry name" value="Ribonuclease PH domain 2-like"/>
    <property type="match status" value="1"/>
</dbReference>
<dbReference type="SUPFAM" id="SSF54211">
    <property type="entry name" value="Ribosomal protein S5 domain 2-like"/>
    <property type="match status" value="1"/>
</dbReference>
<dbReference type="PROSITE" id="PS01277">
    <property type="entry name" value="RIBONUCLEASE_PH"/>
    <property type="match status" value="1"/>
</dbReference>
<name>RNPH_YERPN</name>
<keyword id="KW-0548">Nucleotidyltransferase</keyword>
<keyword id="KW-0694">RNA-binding</keyword>
<keyword id="KW-0698">rRNA processing</keyword>
<keyword id="KW-0808">Transferase</keyword>
<keyword id="KW-0819">tRNA processing</keyword>
<keyword id="KW-0820">tRNA-binding</keyword>